<organism>
    <name type="scientific">Cycas taitungensis</name>
    <name type="common">Prince sago</name>
    <name type="synonym">Cycas taiwaniana</name>
    <dbReference type="NCBI Taxonomy" id="54799"/>
    <lineage>
        <taxon>Eukaryota</taxon>
        <taxon>Viridiplantae</taxon>
        <taxon>Streptophyta</taxon>
        <taxon>Embryophyta</taxon>
        <taxon>Tracheophyta</taxon>
        <taxon>Spermatophyta</taxon>
        <taxon>Cycadidae</taxon>
        <taxon>Cycadales</taxon>
        <taxon>Cycadaceae</taxon>
        <taxon>Cycas</taxon>
    </lineage>
</organism>
<feature type="chain" id="PRO_0000325731" description="Photosystem II reaction center protein M">
    <location>
        <begin position="1"/>
        <end position="34"/>
    </location>
</feature>
<feature type="transmembrane region" description="Helical" evidence="1">
    <location>
        <begin position="5"/>
        <end position="25"/>
    </location>
</feature>
<accession>A6H5G2</accession>
<evidence type="ECO:0000255" key="1">
    <source>
        <dbReference type="HAMAP-Rule" id="MF_00438"/>
    </source>
</evidence>
<evidence type="ECO:0000305" key="2"/>
<gene>
    <name evidence="1" type="primary">psbM</name>
</gene>
<geneLocation type="chloroplast"/>
<sequence length="34" mass="3770">MEVNILAFIAIVLFISVPTAFLLIIYVKTVSESN</sequence>
<comment type="function">
    <text evidence="1">One of the components of the core complex of photosystem II (PSII). PSII is a light-driven water:plastoquinone oxidoreductase that uses light energy to abstract electrons from H(2)O, generating O(2) and a proton gradient subsequently used for ATP formation. It consists of a core antenna complex that captures photons, and an electron transfer chain that converts photonic excitation into a charge separation. This subunit is found at the monomer-monomer interface.</text>
</comment>
<comment type="subunit">
    <text evidence="1">PSII is composed of 1 copy each of membrane proteins PsbA, PsbB, PsbC, PsbD, PsbE, PsbF, PsbH, PsbI, PsbJ, PsbK, PsbL, PsbM, PsbT, PsbX, PsbY, PsbZ, Psb30/Ycf12, at least 3 peripheral proteins of the oxygen-evolving complex and a large number of cofactors. It forms dimeric complexes.</text>
</comment>
<comment type="subcellular location">
    <subcellularLocation>
        <location evidence="1">Plastid</location>
        <location evidence="1">Chloroplast thylakoid membrane</location>
        <topology evidence="1">Single-pass membrane protein</topology>
    </subcellularLocation>
</comment>
<comment type="similarity">
    <text evidence="1">Belongs to the PsbM family.</text>
</comment>
<comment type="sequence caution" evidence="2">
    <conflict type="miscellaneous discrepancy">
        <sequence resource="EMBL-CDS" id="BAF64928"/>
    </conflict>
    <text>The ACG codon predicted at position 1 is probably a sequencing error and has been translated as ATG as in found in orthologs.</text>
</comment>
<reference key="1">
    <citation type="journal article" date="2007" name="Mol. Biol. Evol.">
        <title>Chloroplast genome (cpDNA) of Cycas taitungensis and 56 cp protein-coding genes of Gnetum parvifolium: insights into cpDNA evolution and phylogeny of extant seed plants.</title>
        <authorList>
            <person name="Wu C.-S."/>
            <person name="Wang Y.-N."/>
            <person name="Liu S.-M."/>
            <person name="Chaw S.-M."/>
        </authorList>
    </citation>
    <scope>NUCLEOTIDE SEQUENCE [LARGE SCALE GENOMIC DNA]</scope>
</reference>
<dbReference type="EMBL" id="AP009339">
    <property type="protein sequence ID" value="BAF64928.1"/>
    <property type="status" value="ALT_SEQ"/>
    <property type="molecule type" value="Genomic_DNA"/>
</dbReference>
<dbReference type="RefSeq" id="YP_001312187.1">
    <property type="nucleotide sequence ID" value="NC_009618.1"/>
</dbReference>
<dbReference type="SMR" id="A6H5G2"/>
<dbReference type="GeneID" id="5309539"/>
<dbReference type="GO" id="GO:0009535">
    <property type="term" value="C:chloroplast thylakoid membrane"/>
    <property type="evidence" value="ECO:0007669"/>
    <property type="project" value="UniProtKB-SubCell"/>
</dbReference>
<dbReference type="GO" id="GO:0009523">
    <property type="term" value="C:photosystem II"/>
    <property type="evidence" value="ECO:0007669"/>
    <property type="project" value="UniProtKB-KW"/>
</dbReference>
<dbReference type="GO" id="GO:0019684">
    <property type="term" value="P:photosynthesis, light reaction"/>
    <property type="evidence" value="ECO:0007669"/>
    <property type="project" value="InterPro"/>
</dbReference>
<dbReference type="HAMAP" id="MF_00438">
    <property type="entry name" value="PSII_PsbM"/>
    <property type="match status" value="1"/>
</dbReference>
<dbReference type="InterPro" id="IPR007826">
    <property type="entry name" value="PSII_PsbM"/>
</dbReference>
<dbReference type="InterPro" id="IPR037269">
    <property type="entry name" value="PSII_PsbM_sf"/>
</dbReference>
<dbReference type="NCBIfam" id="TIGR03038">
    <property type="entry name" value="PS_II_psbM"/>
    <property type="match status" value="1"/>
</dbReference>
<dbReference type="PANTHER" id="PTHR35774">
    <property type="entry name" value="PHOTOSYSTEM II REACTION CENTER PROTEIN M"/>
    <property type="match status" value="1"/>
</dbReference>
<dbReference type="PANTHER" id="PTHR35774:SF1">
    <property type="entry name" value="PHOTOSYSTEM II REACTION CENTER PROTEIN M"/>
    <property type="match status" value="1"/>
</dbReference>
<dbReference type="Pfam" id="PF05151">
    <property type="entry name" value="PsbM"/>
    <property type="match status" value="1"/>
</dbReference>
<dbReference type="SUPFAM" id="SSF161033">
    <property type="entry name" value="Photosystem II reaction center protein M, PsbM"/>
    <property type="match status" value="1"/>
</dbReference>
<name>PSBM_CYCTA</name>
<proteinExistence type="inferred from homology"/>
<protein>
    <recommendedName>
        <fullName evidence="1">Photosystem II reaction center protein M</fullName>
        <shortName evidence="1">PSII-M</shortName>
    </recommendedName>
</protein>
<keyword id="KW-0150">Chloroplast</keyword>
<keyword id="KW-0472">Membrane</keyword>
<keyword id="KW-0602">Photosynthesis</keyword>
<keyword id="KW-0604">Photosystem II</keyword>
<keyword id="KW-0934">Plastid</keyword>
<keyword id="KW-0674">Reaction center</keyword>
<keyword id="KW-0793">Thylakoid</keyword>
<keyword id="KW-0812">Transmembrane</keyword>
<keyword id="KW-1133">Transmembrane helix</keyword>